<proteinExistence type="evidence at protein level"/>
<reference key="1">
    <citation type="journal article" date="2005" name="Biochem. J.">
        <title>Brown recluse spider (Loxosceles reclusa) venom phospholipase D (PLD) generates lysophosphatidic acid (LPA).</title>
        <authorList>
            <person name="Lee S."/>
            <person name="Lynch K.R."/>
        </authorList>
    </citation>
    <scope>NUCLEOTIDE SEQUENCE [MRNA]</scope>
    <scope>FUNCTION</scope>
    <scope>CATALYTIC ACTIVITY</scope>
    <scope>ACTIVITY REGULATION</scope>
    <scope>BIOPHYSICOCHEMICAL PROPERTIES</scope>
    <scope>MUTAGENESIS OF HIS-37; HIS-73; HIS-108; HIS-164; HIS-180 AND THR-258</scope>
    <scope>SUBSTRATE SPECIFICITY</scope>
    <source>
        <tissue>Venom gland</tissue>
    </source>
</reference>
<keyword id="KW-0204">Cytolysis</keyword>
<keyword id="KW-1061">Dermonecrotic toxin</keyword>
<keyword id="KW-1015">Disulfide bond</keyword>
<keyword id="KW-0325">Glycoprotein</keyword>
<keyword id="KW-0354">Hemolysis</keyword>
<keyword id="KW-0442">Lipid degradation</keyword>
<keyword id="KW-0443">Lipid metabolism</keyword>
<keyword id="KW-0456">Lyase</keyword>
<keyword id="KW-0460">Magnesium</keyword>
<keyword id="KW-0479">Metal-binding</keyword>
<keyword id="KW-0964">Secreted</keyword>
<keyword id="KW-0732">Signal</keyword>
<keyword id="KW-0800">Toxin</keyword>
<keyword id="KW-0865">Zymogen</keyword>
<protein>
    <recommendedName>
        <fullName>Dermonecrotic toxin LrSicTox-alphaIA1ii</fullName>
        <ecNumber evidence="5">4.6.1.-</ecNumber>
    </recommendedName>
    <alternativeName>
        <fullName>Dermonecrotic toxin</fullName>
    </alternativeName>
    <alternativeName>
        <fullName>Phospholipase D</fullName>
        <shortName>PLD</shortName>
    </alternativeName>
    <alternativeName>
        <fullName>SMaseD/LysoPLD</fullName>
    </alternativeName>
    <alternativeName>
        <fullName>Sphingomyelin phosphodiesterase D</fullName>
        <shortName>SMD</shortName>
        <shortName>SMase D</shortName>
        <shortName>Sphingomyelinase D</shortName>
    </alternativeName>
</protein>
<name>A1H2_LOXRE</name>
<comment type="function">
    <text evidence="2 4 8">Dermonecrotic toxins cleave the phosphodiester linkage between the phosphate and headgroup of certain phospholipids (sphingolipid and lysolipid substrates), forming an alcohol (often choline) and a cyclic phosphate (By similarity). This toxin acts on sphingomyelin (SM) (PubMed:15926888). It also acts on a broad range of lysophospholipids, like lysophosphatidylinositol (LPI), lysophosphatidylglycerol (LPG), lysophosphatidylethanolamine (LPE), lysobisphosphatidic acid (LBPA), lysophosphatidylserine (LPS) and lysophosphatidylcholines (LPC) of varying chain lengths (PubMed:15926888). The substrate preference is LPI &gt; LPG &gt; LPS &gt; LPC &gt;&gt; LPE, LBPA (PubMed:15926888). Furthermore, the enzyme also act on cyclic phosphatidic acid and lyso-platelet activating factor (LPAF, an alkyl-LPC) (PubMed:15926888). The enzyme does not act on sphingosylphosphorylcholine (SPC, also known as lyso-sphingomyelin) and PAF (PubMed:15926888). The toxin may also act on ceramide phosphoethanolamine (CPE) (By similarity). It acts by transphosphatidylation, releasing exclusively cyclic phosphate products as second products (By similarity). It does not exhibit detectable PLA1/2 activity (PubMed:15926888). It induces dose-dependent hemolysis and dermonecrosis (PubMed:15926888). Also induces increased vascular permeability, edema, inflammatory response, and platelet aggregation (By similarity).</text>
</comment>
<comment type="catalytic activity">
    <reaction evidence="10">
        <text>an N-(acyl)-sphingosylphosphocholine = an N-(acyl)-sphingosyl-1,3-cyclic phosphate + choline</text>
        <dbReference type="Rhea" id="RHEA:60652"/>
        <dbReference type="ChEBI" id="CHEBI:15354"/>
        <dbReference type="ChEBI" id="CHEBI:64583"/>
        <dbReference type="ChEBI" id="CHEBI:143892"/>
    </reaction>
</comment>
<comment type="catalytic activity">
    <reaction evidence="2">
        <text>an N-(acyl)-sphingosylphosphoethanolamine = an N-(acyl)-sphingosyl-1,3-cyclic phosphate + ethanolamine</text>
        <dbReference type="Rhea" id="RHEA:60648"/>
        <dbReference type="ChEBI" id="CHEBI:57603"/>
        <dbReference type="ChEBI" id="CHEBI:143891"/>
        <dbReference type="ChEBI" id="CHEBI:143892"/>
    </reaction>
</comment>
<comment type="catalytic activity">
    <reaction evidence="10">
        <text>a 1-acyl-sn-glycero-3-phosphocholine = a 1-acyl-sn-glycero-2,3-cyclic phosphate + choline</text>
        <dbReference type="Rhea" id="RHEA:60700"/>
        <dbReference type="ChEBI" id="CHEBI:15354"/>
        <dbReference type="ChEBI" id="CHEBI:58168"/>
        <dbReference type="ChEBI" id="CHEBI:143947"/>
    </reaction>
</comment>
<comment type="catalytic activity">
    <reaction evidence="10">
        <text>a 1-acyl-sn-glycero-3-phosphoethanolamine = a 1-acyl-sn-glycero-2,3-cyclic phosphate + ethanolamine</text>
        <dbReference type="Rhea" id="RHEA:60704"/>
        <dbReference type="ChEBI" id="CHEBI:57603"/>
        <dbReference type="ChEBI" id="CHEBI:64381"/>
        <dbReference type="ChEBI" id="CHEBI:143947"/>
    </reaction>
</comment>
<comment type="cofactor">
    <cofactor evidence="6">
        <name>Mg(2+)</name>
        <dbReference type="ChEBI" id="CHEBI:18420"/>
    </cofactor>
    <text evidence="6">Binds 1 Mg(2+) ion per subunit.</text>
</comment>
<comment type="activity regulation">
    <text evidence="8">Inhibited with low affinity by edelfosine.</text>
</comment>
<comment type="biophysicochemical properties">
    <kinetics>
        <KM evidence="8">436 uM for LPC (12:0)</KM>
        <KM evidence="8">219 uM for LPC (14:0)</KM>
        <KM evidence="8">220 uM for LPC (16:0)</KM>
        <KM evidence="8">104 uM for LPC (18:0)</KM>
        <KM evidence="8">98 uM for LPC (18:1)</KM>
        <KM evidence="8">56 uM for LPAF</KM>
        <KM evidence="8">396 uM for sphingomyelin</KM>
        <Vmax evidence="8">0.47 umol/min/mg enzyme toward LPC (12:0)</Vmax>
        <Vmax evidence="8">2.97 umol/min/mg enzyme toward LPC (14:0)</Vmax>
        <Vmax evidence="8">1.18 umol/min/mg enzyme toward LPC (16:0)</Vmax>
        <Vmax evidence="8">2.37 umol/min/mg enzyme toward LPC (18:0)</Vmax>
        <Vmax evidence="8">2.62 umol/min/mg enzyme toward LPC (18:1)</Vmax>
        <Vmax evidence="8">1.0 umol/min/mg enzyme toward LPAF</Vmax>
        <Vmax evidence="8">2.95 umol/min/mg enzyme toward sphingomyelin</Vmax>
    </kinetics>
</comment>
<comment type="subcellular location">
    <subcellularLocation>
        <location evidence="10">Secreted</location>
    </subcellularLocation>
</comment>
<comment type="tissue specificity">
    <text evidence="10">Expressed by the venom gland.</text>
</comment>
<comment type="similarity">
    <text evidence="9">Belongs to the arthropod phospholipase D family. Class II subfamily. Class IIa sub-subfamily.</text>
</comment>
<comment type="caution">
    <text evidence="2 3 5">The most common activity assay for dermonecrotic toxins detects enzymatic activity by monitoring choline release from substrate. Liberation of choline from sphingomyelin (SM) or lysophosphatidylcholine (LPC) is commonly assumed to result from substrate hydrolysis, giving either ceramide-1-phosphate (C1P) or lysophosphatidic acid (LPA), respectively, as a second product. However, two studies from Lajoie and colleagues (2013 and 2015) report the observation of exclusive formation of cyclic phosphate products as second products, resulting from intramolecular transphosphatidylation. Cyclic phosphates have vastly different biological properties from their monoester counterparts, and they may be relevant to the pathology of brown spider envenomation.</text>
</comment>
<organism>
    <name type="scientific">Loxosceles reclusa</name>
    <name type="common">Brown recluse spider</name>
    <dbReference type="NCBI Taxonomy" id="6921"/>
    <lineage>
        <taxon>Eukaryota</taxon>
        <taxon>Metazoa</taxon>
        <taxon>Ecdysozoa</taxon>
        <taxon>Arthropoda</taxon>
        <taxon>Chelicerata</taxon>
        <taxon>Arachnida</taxon>
        <taxon>Araneae</taxon>
        <taxon>Araneomorphae</taxon>
        <taxon>Haplogynae</taxon>
        <taxon>Scytodoidea</taxon>
        <taxon>Sicariidae</taxon>
        <taxon>Loxosceles</taxon>
    </lineage>
</organism>
<accession>P0CE79</accession>
<accession>Q5I225</accession>
<accession>Q5YD74</accession>
<sequence length="305" mass="34218">MLLYVTLILGCWSAFSESAETDVAERANKRPIWIMGHMVNAIYQIDEFVNLGANSIETDVSFDKDANPEYTYHGVPCDCGRSCLKWEYFSDFLKGLRKATTPGDSKYHAKLVLVVFDLKTGSLYDNQAYDAGKKLAKNLLKHYWNNGNNGGRAYIVLSIPDLNHYKLITGFKETLKSEGHPELMDKVGHDFSGNDAIGDVGNAYKKAGVTGHVWQSDGITNCLLRGLSRVKEAVKNRDSSNGFINKVYYWTVDKRATTREALDAGVDGVMTNYPDVITDVLNESAYKAKFRIATYDDNPWETFKN</sequence>
<feature type="signal peptide" evidence="7">
    <location>
        <begin position="1"/>
        <end position="18"/>
    </location>
</feature>
<feature type="propeptide" id="PRO_0000392733" evidence="1">
    <location>
        <begin position="19"/>
        <end position="26"/>
    </location>
</feature>
<feature type="chain" id="PRO_0000392734" description="Dermonecrotic toxin LrSicTox-alphaIA1ii">
    <location>
        <begin position="27"/>
        <end position="305"/>
    </location>
</feature>
<feature type="active site" evidence="8">
    <location>
        <position position="37"/>
    </location>
</feature>
<feature type="active site" description="Nucleophile" evidence="8">
    <location>
        <position position="73"/>
    </location>
</feature>
<feature type="binding site" evidence="6">
    <location>
        <position position="57"/>
    </location>
    <ligand>
        <name>Mg(2+)</name>
        <dbReference type="ChEBI" id="CHEBI:18420"/>
    </ligand>
</feature>
<feature type="binding site" evidence="6">
    <location>
        <position position="59"/>
    </location>
    <ligand>
        <name>Mg(2+)</name>
        <dbReference type="ChEBI" id="CHEBI:18420"/>
    </ligand>
</feature>
<feature type="binding site" evidence="6">
    <location>
        <position position="117"/>
    </location>
    <ligand>
        <name>Mg(2+)</name>
        <dbReference type="ChEBI" id="CHEBI:18420"/>
    </ligand>
</feature>
<feature type="glycosylation site" description="N-linked (GlcNAc...) asparagine" evidence="7">
    <location>
        <position position="282"/>
    </location>
</feature>
<feature type="disulfide bond" evidence="4">
    <location>
        <begin position="77"/>
        <end position="83"/>
    </location>
</feature>
<feature type="disulfide bond" evidence="4">
    <location>
        <begin position="79"/>
        <end position="222"/>
    </location>
</feature>
<feature type="mutagenesis site" description="Abolishes enzyme activity." evidence="8">
    <original>H</original>
    <variation>N</variation>
    <location>
        <position position="37"/>
    </location>
</feature>
<feature type="mutagenesis site" description="Abolishes enzyme activity." evidence="8">
    <original>H</original>
    <variation>N</variation>
    <location>
        <position position="73"/>
    </location>
</feature>
<feature type="mutagenesis site" description="Little decrease in enzyme activity." evidence="8">
    <original>H</original>
    <variation>A</variation>
    <variation>N</variation>
    <location>
        <position position="108"/>
    </location>
</feature>
<feature type="mutagenesis site" description="Little decrease in enzyme activity." evidence="8">
    <original>H</original>
    <variation>N</variation>
    <location>
        <position position="164"/>
    </location>
</feature>
<feature type="mutagenesis site" description="Little decrease in enzyme activity." evidence="8">
    <original>H</original>
    <variation>N</variation>
    <location>
        <position position="180"/>
    </location>
</feature>
<feature type="mutagenesis site" description="Little decrease in enzyme activity." evidence="8">
    <original>T</original>
    <variation>V</variation>
    <location>
        <position position="258"/>
    </location>
</feature>
<evidence type="ECO:0000250" key="1"/>
<evidence type="ECO:0000250" key="2">
    <source>
        <dbReference type="UniProtKB" id="A0A0D4WTV1"/>
    </source>
</evidence>
<evidence type="ECO:0000250" key="3">
    <source>
        <dbReference type="UniProtKB" id="A0A0D4WV12"/>
    </source>
</evidence>
<evidence type="ECO:0000250" key="4">
    <source>
        <dbReference type="UniProtKB" id="P0CE80"/>
    </source>
</evidence>
<evidence type="ECO:0000250" key="5">
    <source>
        <dbReference type="UniProtKB" id="Q4ZFU2"/>
    </source>
</evidence>
<evidence type="ECO:0000250" key="6">
    <source>
        <dbReference type="UniProtKB" id="Q8I914"/>
    </source>
</evidence>
<evidence type="ECO:0000255" key="7"/>
<evidence type="ECO:0000269" key="8">
    <source>
    </source>
</evidence>
<evidence type="ECO:0000305" key="9"/>
<evidence type="ECO:0000305" key="10">
    <source>
    </source>
</evidence>
<dbReference type="EC" id="4.6.1.-" evidence="5"/>
<dbReference type="EMBL" id="AY862486">
    <property type="protein sequence ID" value="AAW56831.1"/>
    <property type="molecule type" value="mRNA"/>
</dbReference>
<dbReference type="SMR" id="P0CE79"/>
<dbReference type="GO" id="GO:0005576">
    <property type="term" value="C:extracellular region"/>
    <property type="evidence" value="ECO:0007669"/>
    <property type="project" value="UniProtKB-SubCell"/>
</dbReference>
<dbReference type="GO" id="GO:0016829">
    <property type="term" value="F:lyase activity"/>
    <property type="evidence" value="ECO:0007669"/>
    <property type="project" value="UniProtKB-KW"/>
</dbReference>
<dbReference type="GO" id="GO:0046872">
    <property type="term" value="F:metal ion binding"/>
    <property type="evidence" value="ECO:0007669"/>
    <property type="project" value="UniProtKB-KW"/>
</dbReference>
<dbReference type="GO" id="GO:0008081">
    <property type="term" value="F:phosphoric diester hydrolase activity"/>
    <property type="evidence" value="ECO:0007669"/>
    <property type="project" value="InterPro"/>
</dbReference>
<dbReference type="GO" id="GO:0090729">
    <property type="term" value="F:toxin activity"/>
    <property type="evidence" value="ECO:0007669"/>
    <property type="project" value="UniProtKB-KW"/>
</dbReference>
<dbReference type="GO" id="GO:0031640">
    <property type="term" value="P:killing of cells of another organism"/>
    <property type="evidence" value="ECO:0007669"/>
    <property type="project" value="UniProtKB-KW"/>
</dbReference>
<dbReference type="GO" id="GO:0016042">
    <property type="term" value="P:lipid catabolic process"/>
    <property type="evidence" value="ECO:0007669"/>
    <property type="project" value="UniProtKB-KW"/>
</dbReference>
<dbReference type="CDD" id="cd08576">
    <property type="entry name" value="GDPD_like_SMaseD_PLD"/>
    <property type="match status" value="1"/>
</dbReference>
<dbReference type="Gene3D" id="3.20.20.190">
    <property type="entry name" value="Phosphatidylinositol (PI) phosphodiesterase"/>
    <property type="match status" value="1"/>
</dbReference>
<dbReference type="InterPro" id="IPR017946">
    <property type="entry name" value="PLC-like_Pdiesterase_TIM-brl"/>
</dbReference>
<dbReference type="Pfam" id="PF13653">
    <property type="entry name" value="GDPD_2"/>
    <property type="match status" value="1"/>
</dbReference>
<dbReference type="SUPFAM" id="SSF51695">
    <property type="entry name" value="PLC-like phosphodiesterases"/>
    <property type="match status" value="1"/>
</dbReference>